<keyword id="KW-0066">ATP synthesis</keyword>
<keyword id="KW-0138">CF(0)</keyword>
<keyword id="KW-0375">Hydrogen ion transport</keyword>
<keyword id="KW-0406">Ion transport</keyword>
<keyword id="KW-0472">Membrane</keyword>
<keyword id="KW-0496">Mitochondrion</keyword>
<keyword id="KW-0999">Mitochondrion inner membrane</keyword>
<keyword id="KW-0812">Transmembrane</keyword>
<keyword id="KW-1133">Transmembrane helix</keyword>
<keyword id="KW-0813">Transport</keyword>
<feature type="chain" id="PRO_0000082110" description="ATP synthase F(0) complex subunit a">
    <location>
        <begin position="1"/>
        <end position="226"/>
    </location>
</feature>
<feature type="transmembrane region" description="Helical" evidence="2">
    <location>
        <begin position="10"/>
        <end position="30"/>
    </location>
</feature>
<feature type="transmembrane region" description="Helical" evidence="2">
    <location>
        <begin position="68"/>
        <end position="88"/>
    </location>
</feature>
<feature type="transmembrane region" description="Helical" evidence="2">
    <location>
        <begin position="97"/>
        <end position="117"/>
    </location>
</feature>
<feature type="transmembrane region" description="Helical" evidence="2">
    <location>
        <begin position="138"/>
        <end position="158"/>
    </location>
</feature>
<feature type="transmembrane region" description="Helical" evidence="2">
    <location>
        <begin position="164"/>
        <end position="184"/>
    </location>
</feature>
<feature type="transmembrane region" description="Helical" evidence="2">
    <location>
        <begin position="189"/>
        <end position="209"/>
    </location>
</feature>
<geneLocation type="mitochondrion"/>
<accession>P14413</accession>
<name>ATP6_CRIGR</name>
<dbReference type="EMBL" id="M14311">
    <property type="protein sequence ID" value="AAA68616.1"/>
    <property type="molecule type" value="Genomic_DNA"/>
</dbReference>
<dbReference type="PIR" id="B25188">
    <property type="entry name" value="B25188"/>
</dbReference>
<dbReference type="SMR" id="P14413"/>
<dbReference type="Proteomes" id="UP000694386">
    <property type="component" value="Unplaced"/>
</dbReference>
<dbReference type="Proteomes" id="UP001108280">
    <property type="component" value="Unplaced"/>
</dbReference>
<dbReference type="GO" id="GO:0005743">
    <property type="term" value="C:mitochondrial inner membrane"/>
    <property type="evidence" value="ECO:0007669"/>
    <property type="project" value="UniProtKB-SubCell"/>
</dbReference>
<dbReference type="GO" id="GO:0045259">
    <property type="term" value="C:proton-transporting ATP synthase complex"/>
    <property type="evidence" value="ECO:0000250"/>
    <property type="project" value="UniProtKB"/>
</dbReference>
<dbReference type="GO" id="GO:0015252">
    <property type="term" value="F:proton channel activity"/>
    <property type="evidence" value="ECO:0000250"/>
    <property type="project" value="UniProtKB"/>
</dbReference>
<dbReference type="GO" id="GO:0046933">
    <property type="term" value="F:proton-transporting ATP synthase activity, rotational mechanism"/>
    <property type="evidence" value="ECO:0007669"/>
    <property type="project" value="TreeGrafter"/>
</dbReference>
<dbReference type="GO" id="GO:0015986">
    <property type="term" value="P:proton motive force-driven ATP synthesis"/>
    <property type="evidence" value="ECO:0000250"/>
    <property type="project" value="UniProtKB"/>
</dbReference>
<dbReference type="GO" id="GO:1902600">
    <property type="term" value="P:proton transmembrane transport"/>
    <property type="evidence" value="ECO:0000250"/>
    <property type="project" value="UniProtKB"/>
</dbReference>
<dbReference type="CDD" id="cd00310">
    <property type="entry name" value="ATP-synt_Fo_a_6"/>
    <property type="match status" value="1"/>
</dbReference>
<dbReference type="FunFam" id="1.20.120.220:FF:000004">
    <property type="entry name" value="ATP synthase subunit a"/>
    <property type="match status" value="1"/>
</dbReference>
<dbReference type="Gene3D" id="1.20.120.220">
    <property type="entry name" value="ATP synthase, F0 complex, subunit A"/>
    <property type="match status" value="1"/>
</dbReference>
<dbReference type="InterPro" id="IPR000568">
    <property type="entry name" value="ATP_synth_F0_asu"/>
</dbReference>
<dbReference type="InterPro" id="IPR023011">
    <property type="entry name" value="ATP_synth_F0_asu_AS"/>
</dbReference>
<dbReference type="InterPro" id="IPR045083">
    <property type="entry name" value="ATP_synth_F0_asu_bact/mt"/>
</dbReference>
<dbReference type="InterPro" id="IPR035908">
    <property type="entry name" value="F0_ATP_A_sf"/>
</dbReference>
<dbReference type="NCBIfam" id="TIGR01131">
    <property type="entry name" value="ATP_synt_6_or_A"/>
    <property type="match status" value="1"/>
</dbReference>
<dbReference type="PANTHER" id="PTHR11410">
    <property type="entry name" value="ATP SYNTHASE SUBUNIT A"/>
    <property type="match status" value="1"/>
</dbReference>
<dbReference type="PANTHER" id="PTHR11410:SF0">
    <property type="entry name" value="ATP SYNTHASE SUBUNIT A"/>
    <property type="match status" value="1"/>
</dbReference>
<dbReference type="Pfam" id="PF00119">
    <property type="entry name" value="ATP-synt_A"/>
    <property type="match status" value="1"/>
</dbReference>
<dbReference type="PRINTS" id="PR00123">
    <property type="entry name" value="ATPASEA"/>
</dbReference>
<dbReference type="SUPFAM" id="SSF81336">
    <property type="entry name" value="F1F0 ATP synthase subunit A"/>
    <property type="match status" value="1"/>
</dbReference>
<dbReference type="PROSITE" id="PS00449">
    <property type="entry name" value="ATPASE_A"/>
    <property type="match status" value="1"/>
</dbReference>
<reference key="1">
    <citation type="journal article" date="1986" name="J. Biol. Chem.">
        <title>Mitochondrial DNA of two independent oligomycin-resistant Chinese hamster ovary cell lines contains a single nucleotide change in the ATPase 6 gene.</title>
        <authorList>
            <person name="Breen G.A.M."/>
            <person name="Miller D.L."/>
            <person name="Holmans P.L."/>
            <person name="Welch G."/>
        </authorList>
    </citation>
    <scope>NUCLEOTIDE SEQUENCE [GENOMIC DNA]</scope>
</reference>
<organism>
    <name type="scientific">Cricetulus griseus</name>
    <name type="common">Chinese hamster</name>
    <name type="synonym">Cricetulus barabensis griseus</name>
    <dbReference type="NCBI Taxonomy" id="10029"/>
    <lineage>
        <taxon>Eukaryota</taxon>
        <taxon>Metazoa</taxon>
        <taxon>Chordata</taxon>
        <taxon>Craniata</taxon>
        <taxon>Vertebrata</taxon>
        <taxon>Euteleostomi</taxon>
        <taxon>Mammalia</taxon>
        <taxon>Eutheria</taxon>
        <taxon>Euarchontoglires</taxon>
        <taxon>Glires</taxon>
        <taxon>Rodentia</taxon>
        <taxon>Myomorpha</taxon>
        <taxon>Muroidea</taxon>
        <taxon>Cricetidae</taxon>
        <taxon>Cricetinae</taxon>
        <taxon>Cricetulus</taxon>
    </lineage>
</organism>
<gene>
    <name evidence="1" type="primary">MT-ATP6</name>
    <name type="synonym">ATP6</name>
    <name type="synonym">ATPASE6</name>
    <name type="synonym">MTATP6</name>
</gene>
<sequence>MNENLFSSFITPTLMGLPIIILIIMFPPVIMTSSKRLVNNRFHTFQQWLIKLITKQMMAIHSPKGRTWSLMLASLIIFIGSTNLLGLLPHTFTPTTQLSMNLGMAIPPWAGAVILGFRHKMKDSLAHFLPQGTPIPLIPMLVIIETISLFIQPMALAVRLTANITAGHLLMHLIGGATLVLTSISLPTAMITFIILIMLTILEFAVALIQAYVFTLLVSLYLHDNT</sequence>
<comment type="function">
    <text evidence="1">Subunit a, of the mitochondrial membrane ATP synthase complex (F(1)F(0) ATP synthase or Complex V) that produces ATP from ADP in the presence of a proton gradient across the membrane which is generated by electron transport complexes of the respiratory chain. ATP synthase complex consist of a soluble F(1) head domain - the catalytic core - and a membrane F(1) domain - the membrane proton channel. These two domains are linked by a central stalk rotating inside the F(1) region and a stationary peripheral stalk. During catalysis, ATP synthesis in the catalytic domain of F(1) is coupled via a rotary mechanism of the central stalk subunits to proton translocation. With the subunit c (ATP5MC1), forms the proton-conducting channel in the F(0) domain, that contains two crucial half-channels (inlet and outlet) that facilitate proton movement from the mitochondrial intermembrane space (IMS) into the matrix. Protons are taken up via the inlet half-channel and released through the outlet half-channel, following a Grotthuss mechanism.</text>
</comment>
<comment type="catalytic activity">
    <reaction evidence="1">
        <text>H(+)(in) = H(+)(out)</text>
        <dbReference type="Rhea" id="RHEA:34979"/>
        <dbReference type="ChEBI" id="CHEBI:15378"/>
    </reaction>
</comment>
<comment type="subunit">
    <text evidence="1">Component of the ATP synthase complex composed at least of ATP5F1A/subunit alpha, ATP5F1B/subunit beta, ATP5MC1/subunit c (homooctomer), MT-ATP6/subunit a, MT-ATP8/subunit 8, ATP5ME/subunit e, ATP5MF/subunit f, ATP5MG/subunit g, ATP5MK/subunit k, ATP5MJ/subunit j, ATP5F1C/subunit gamma, ATP5F1D/subunit delta, ATP5F1E/subunit epsilon, ATP5PF/subunit F6, ATP5PB/subunit b, ATP5PD/subunit d, ATP5PO/subunit OSCP. ATP synthase complex consists of a soluble F(1) head domain (subunits alpha(3) and beta(3)) - the catalytic core - and a membrane F(0) domain - the membrane proton channel (subunits c, a, 8, e, f, g, k and j). These two domains are linked by a central stalk (subunits gamma, delta, and epsilon) rotating inside the F1 region and a stationary peripheral stalk (subunits F6, b, d, and OSCP). Interacts with DNAJC30; interaction is direct.</text>
</comment>
<comment type="subcellular location">
    <subcellularLocation>
        <location>Mitochondrion inner membrane</location>
        <topology>Multi-pass membrane protein</topology>
    </subcellularLocation>
</comment>
<comment type="similarity">
    <text evidence="3">Belongs to the ATPase A chain family.</text>
</comment>
<evidence type="ECO:0000250" key="1">
    <source>
        <dbReference type="UniProtKB" id="P00846"/>
    </source>
</evidence>
<evidence type="ECO:0000255" key="2"/>
<evidence type="ECO:0000305" key="3"/>
<protein>
    <recommendedName>
        <fullName evidence="1">ATP synthase F(0) complex subunit a</fullName>
    </recommendedName>
    <alternativeName>
        <fullName>F-ATPase protein 6</fullName>
    </alternativeName>
    <alternativeName>
        <fullName evidence="1">Proton-conducting channel, ATP synthase F(0) complex subunit a</fullName>
    </alternativeName>
</protein>
<proteinExistence type="inferred from homology"/>